<protein>
    <recommendedName>
        <fullName>Trimethylamine methyltransferase MttB</fullName>
        <shortName>TMA methyltransferase</shortName>
        <ecNumber>2.1.1.250</ecNumber>
    </recommendedName>
    <alternativeName>
        <fullName>Trimethylamine--corrinoid protein methyltransferase</fullName>
    </alternativeName>
</protein>
<name>MTTB_METBF</name>
<organism>
    <name type="scientific">Methanosarcina barkeri (strain Fusaro / DSM 804)</name>
    <dbReference type="NCBI Taxonomy" id="269797"/>
    <lineage>
        <taxon>Archaea</taxon>
        <taxon>Methanobacteriati</taxon>
        <taxon>Methanobacteriota</taxon>
        <taxon>Stenosarchaea group</taxon>
        <taxon>Methanomicrobia</taxon>
        <taxon>Methanosarcinales</taxon>
        <taxon>Methanosarcinaceae</taxon>
        <taxon>Methanosarcina</taxon>
    </lineage>
</organism>
<comment type="function">
    <text evidence="1">Catalyzes the transfer of a methyl group from trimethylamine to the corrinoid cofactor of MttC.</text>
</comment>
<comment type="catalytic activity">
    <reaction>
        <text>Co(I)-[trimethylamine-specific corrinoid protein] + trimethylamine + H(+) = methyl-Co(III)-[trimethylamine-specific corrinoid protein] + dimethylamine</text>
        <dbReference type="Rhea" id="RHEA:39287"/>
        <dbReference type="Rhea" id="RHEA-COMP:11124"/>
        <dbReference type="Rhea" id="RHEA-COMP:11126"/>
        <dbReference type="ChEBI" id="CHEBI:15378"/>
        <dbReference type="ChEBI" id="CHEBI:58040"/>
        <dbReference type="ChEBI" id="CHEBI:58389"/>
        <dbReference type="ChEBI" id="CHEBI:85033"/>
        <dbReference type="ChEBI" id="CHEBI:85035"/>
        <dbReference type="EC" id="2.1.1.250"/>
    </reaction>
</comment>
<comment type="pathway">
    <text>One-carbon metabolism; methanogenesis from trimethylamine.</text>
</comment>
<comment type="similarity">
    <text evidence="2">Belongs to the trimethylamine methyltransferase family.</text>
</comment>
<dbReference type="EC" id="2.1.1.250"/>
<dbReference type="EMBL" id="CP000099">
    <property type="status" value="NOT_ANNOTATED_CDS"/>
    <property type="molecule type" value="Genomic_DNA"/>
</dbReference>
<dbReference type="UniPathway" id="UPA00645"/>
<dbReference type="GO" id="GO:0043834">
    <property type="term" value="F:trimethylamine methyltransferase activity"/>
    <property type="evidence" value="ECO:0007669"/>
    <property type="project" value="UniProtKB-EC"/>
</dbReference>
<dbReference type="GO" id="GO:0015948">
    <property type="term" value="P:methanogenesis"/>
    <property type="evidence" value="ECO:0007669"/>
    <property type="project" value="UniProtKB-KW"/>
</dbReference>
<dbReference type="GO" id="GO:0032259">
    <property type="term" value="P:methylation"/>
    <property type="evidence" value="ECO:0007669"/>
    <property type="project" value="UniProtKB-KW"/>
</dbReference>
<dbReference type="FunFam" id="3.20.20.480:FF:000001">
    <property type="entry name" value="Trimethylamine methyltransferase"/>
    <property type="match status" value="1"/>
</dbReference>
<dbReference type="Gene3D" id="3.20.20.480">
    <property type="entry name" value="Trimethylamine methyltransferase-like"/>
    <property type="match status" value="1"/>
</dbReference>
<dbReference type="InterPro" id="IPR038601">
    <property type="entry name" value="MttB-like_sf"/>
</dbReference>
<dbReference type="InterPro" id="IPR012740">
    <property type="entry name" value="MttB_Methanosar"/>
</dbReference>
<dbReference type="InterPro" id="IPR010426">
    <property type="entry name" value="MTTB_MeTrfase"/>
</dbReference>
<dbReference type="NCBIfam" id="TIGR02369">
    <property type="entry name" value="trimeth_pyl"/>
    <property type="match status" value="1"/>
</dbReference>
<dbReference type="Pfam" id="PF06253">
    <property type="entry name" value="MTTB"/>
    <property type="match status" value="1"/>
</dbReference>
<dbReference type="PIRSF" id="PIRSF037567">
    <property type="entry name" value="MTTB_MeTrfase"/>
    <property type="match status" value="1"/>
</dbReference>
<reference key="1">
    <citation type="journal article" date="2006" name="J. Bacteriol.">
        <title>The Methanosarcina barkeri genome: comparative analysis with Methanosarcina acetivorans and Methanosarcina mazei reveals extensive rearrangement within methanosarcinal genomes.</title>
        <authorList>
            <person name="Maeder D.L."/>
            <person name="Anderson I."/>
            <person name="Brettin T.S."/>
            <person name="Bruce D.C."/>
            <person name="Gilna P."/>
            <person name="Han C.S."/>
            <person name="Lapidus A."/>
            <person name="Metcalf W.W."/>
            <person name="Saunders E."/>
            <person name="Tapia R."/>
            <person name="Sowers K.R."/>
        </authorList>
    </citation>
    <scope>NUCLEOTIDE SEQUENCE [LARGE SCALE GENOMIC DNA]</scope>
    <source>
        <strain>Fusaro / DSM 804</strain>
    </source>
</reference>
<gene>
    <name type="primary">mttB</name>
    <name type="ordered locus">Mbar_A1502</name>
</gene>
<accession>P0C0W7</accession>
<evidence type="ECO:0000250" key="1"/>
<evidence type="ECO:0000305" key="2"/>
<sequence length="495" mass="53900">MAKNNAVAGFNALNGVELNLFTTDELKAIHYATMEVLMDPGIQVSDPEARQIFKENGCEVDEKTNVVKIPEYLVRKALQLAPSRFILWGRDKKFNTVQECGGKVHWTCFGTGVKMCKYQDGKYVTVDSVEKDIADIAKLCDWAENIDYFSLPVSARDIAGQGAQDVHETLTPIANTAKHFHHIDPVGENVEYYRDIVKAYYGGDEEEARKKPIFSMLLCPTSPLELSVNACQVIIKGARYGIPVNVLSMAMSGGSSPVYLAGTLVTHNAEVLSGIVLAQLTVPGAKVWYGSSTTTFDLKKGTAPVGSPELGLISAAVAKLAQFYGLPSYVAGSOSDAKVPDDQAGHEKTMTTLLPALSGANTIYGAGMLELGMTFSMEQLVIDNDIFSMVKKAMKGIPVSEETLAVESIQKVGIGNNFLALKQTRQLVDYPSNPMLLDRHMFGDWAAAGSKDLATVAHEKVEDVLKNHQVTPIDADILKDMQAIVDKADKAFRGM</sequence>
<keyword id="KW-0484">Methanogenesis</keyword>
<keyword id="KW-0489">Methyltransferase</keyword>
<keyword id="KW-0669">Pyrrolysine</keyword>
<keyword id="KW-0808">Transferase</keyword>
<proteinExistence type="inferred from homology"/>
<feature type="initiator methionine" description="Removed" evidence="1">
    <location>
        <position position="1"/>
    </location>
</feature>
<feature type="chain" id="PRO_0000216570" description="Trimethylamine methyltransferase MttB">
    <location>
        <begin position="2"/>
        <end position="495"/>
    </location>
</feature>
<feature type="non-standard amino acid" description="Pyrrolysine" evidence="1">
    <location>
        <position position="334"/>
    </location>
</feature>